<name>RECR_CHLSY</name>
<reference key="1">
    <citation type="submission" date="2009-01" db="EMBL/GenBank/DDBJ databases">
        <title>Complete sequence of Chloroflexus sp. Y-400-fl.</title>
        <authorList>
            <consortium name="US DOE Joint Genome Institute"/>
            <person name="Lucas S."/>
            <person name="Copeland A."/>
            <person name="Lapidus A."/>
            <person name="Glavina del Rio T."/>
            <person name="Dalin E."/>
            <person name="Tice H."/>
            <person name="Bruce D."/>
            <person name="Goodwin L."/>
            <person name="Pitluck S."/>
            <person name="Sims D."/>
            <person name="Kiss H."/>
            <person name="Brettin T."/>
            <person name="Detter J.C."/>
            <person name="Han C."/>
            <person name="Larimer F."/>
            <person name="Land M."/>
            <person name="Hauser L."/>
            <person name="Kyrpides N."/>
            <person name="Ovchinnikova G."/>
            <person name="Bryant D.A."/>
            <person name="Richardson P."/>
        </authorList>
    </citation>
    <scope>NUCLEOTIDE SEQUENCE [LARGE SCALE GENOMIC DNA]</scope>
    <source>
        <strain>ATCC 29364 / DSM 637 / Y-400-fl</strain>
    </source>
</reference>
<accession>B9LJ32</accession>
<protein>
    <recommendedName>
        <fullName evidence="1">Recombination protein RecR</fullName>
    </recommendedName>
</protein>
<feature type="chain" id="PRO_1000195372" description="Recombination protein RecR">
    <location>
        <begin position="1"/>
        <end position="204"/>
    </location>
</feature>
<feature type="domain" description="Toprim" evidence="1">
    <location>
        <begin position="86"/>
        <end position="181"/>
    </location>
</feature>
<feature type="zinc finger region" description="C4-type" evidence="1">
    <location>
        <begin position="63"/>
        <end position="78"/>
    </location>
</feature>
<comment type="function">
    <text evidence="1">May play a role in DNA repair. It seems to be involved in an RecBC-independent recombinational process of DNA repair. It may act with RecF and RecO.</text>
</comment>
<comment type="similarity">
    <text evidence="1">Belongs to the RecR family.</text>
</comment>
<sequence length="204" mass="22496">MTVRTDQLIAAPVARLIEEFAKLPGIGPKTASRLTFYLLRAEPKQALALAQAILDVKEQVGYCRRCFNITVGELCAICLDPSRDQTKICVVEEPLDVLAIERTGAYRGLYHVLHGHIAPLEGIYREDLKIEELLARVRSEPVQEVILATNPNTEGEATAFLLLRDLAPLGVRVTRPARGLPTGGDLEWADPETLGSAFEGRREL</sequence>
<dbReference type="EMBL" id="CP001364">
    <property type="protein sequence ID" value="ACM51994.1"/>
    <property type="molecule type" value="Genomic_DNA"/>
</dbReference>
<dbReference type="SMR" id="B9LJ32"/>
<dbReference type="KEGG" id="chl:Chy400_0557"/>
<dbReference type="HOGENOM" id="CLU_060739_1_0_0"/>
<dbReference type="OrthoDB" id="9802672at2"/>
<dbReference type="GO" id="GO:0003677">
    <property type="term" value="F:DNA binding"/>
    <property type="evidence" value="ECO:0007669"/>
    <property type="project" value="UniProtKB-UniRule"/>
</dbReference>
<dbReference type="GO" id="GO:0008270">
    <property type="term" value="F:zinc ion binding"/>
    <property type="evidence" value="ECO:0007669"/>
    <property type="project" value="UniProtKB-KW"/>
</dbReference>
<dbReference type="GO" id="GO:0006310">
    <property type="term" value="P:DNA recombination"/>
    <property type="evidence" value="ECO:0007669"/>
    <property type="project" value="UniProtKB-UniRule"/>
</dbReference>
<dbReference type="GO" id="GO:0006281">
    <property type="term" value="P:DNA repair"/>
    <property type="evidence" value="ECO:0007669"/>
    <property type="project" value="UniProtKB-UniRule"/>
</dbReference>
<dbReference type="CDD" id="cd01025">
    <property type="entry name" value="TOPRIM_recR"/>
    <property type="match status" value="1"/>
</dbReference>
<dbReference type="Gene3D" id="3.30.60.80">
    <property type="match status" value="1"/>
</dbReference>
<dbReference type="Gene3D" id="3.40.1360.10">
    <property type="match status" value="1"/>
</dbReference>
<dbReference type="Gene3D" id="6.10.250.240">
    <property type="match status" value="1"/>
</dbReference>
<dbReference type="Gene3D" id="1.10.8.420">
    <property type="entry name" value="RecR Domain 1"/>
    <property type="match status" value="1"/>
</dbReference>
<dbReference type="HAMAP" id="MF_00017">
    <property type="entry name" value="RecR"/>
    <property type="match status" value="1"/>
</dbReference>
<dbReference type="InterPro" id="IPR000093">
    <property type="entry name" value="DNA_Rcmb_RecR"/>
</dbReference>
<dbReference type="InterPro" id="IPR023627">
    <property type="entry name" value="Rcmb_RecR"/>
</dbReference>
<dbReference type="InterPro" id="IPR015967">
    <property type="entry name" value="Rcmb_RecR_Znf"/>
</dbReference>
<dbReference type="InterPro" id="IPR006171">
    <property type="entry name" value="TOPRIM_dom"/>
</dbReference>
<dbReference type="InterPro" id="IPR034137">
    <property type="entry name" value="TOPRIM_RecR"/>
</dbReference>
<dbReference type="NCBIfam" id="TIGR00615">
    <property type="entry name" value="recR"/>
    <property type="match status" value="1"/>
</dbReference>
<dbReference type="PANTHER" id="PTHR30446">
    <property type="entry name" value="RECOMBINATION PROTEIN RECR"/>
    <property type="match status" value="1"/>
</dbReference>
<dbReference type="PANTHER" id="PTHR30446:SF0">
    <property type="entry name" value="RECOMBINATION PROTEIN RECR"/>
    <property type="match status" value="1"/>
</dbReference>
<dbReference type="Pfam" id="PF21175">
    <property type="entry name" value="RecR_C"/>
    <property type="match status" value="1"/>
</dbReference>
<dbReference type="Pfam" id="PF21176">
    <property type="entry name" value="RecR_HhH"/>
    <property type="match status" value="1"/>
</dbReference>
<dbReference type="Pfam" id="PF02132">
    <property type="entry name" value="RecR_ZnF"/>
    <property type="match status" value="1"/>
</dbReference>
<dbReference type="Pfam" id="PF13662">
    <property type="entry name" value="Toprim_4"/>
    <property type="match status" value="1"/>
</dbReference>
<dbReference type="SMART" id="SM00493">
    <property type="entry name" value="TOPRIM"/>
    <property type="match status" value="1"/>
</dbReference>
<dbReference type="SUPFAM" id="SSF111304">
    <property type="entry name" value="Recombination protein RecR"/>
    <property type="match status" value="1"/>
</dbReference>
<dbReference type="PROSITE" id="PS01300">
    <property type="entry name" value="RECR"/>
    <property type="match status" value="1"/>
</dbReference>
<dbReference type="PROSITE" id="PS50880">
    <property type="entry name" value="TOPRIM"/>
    <property type="match status" value="1"/>
</dbReference>
<evidence type="ECO:0000255" key="1">
    <source>
        <dbReference type="HAMAP-Rule" id="MF_00017"/>
    </source>
</evidence>
<organism>
    <name type="scientific">Chloroflexus aurantiacus (strain ATCC 29364 / DSM 637 / Y-400-fl)</name>
    <dbReference type="NCBI Taxonomy" id="480224"/>
    <lineage>
        <taxon>Bacteria</taxon>
        <taxon>Bacillati</taxon>
        <taxon>Chloroflexota</taxon>
        <taxon>Chloroflexia</taxon>
        <taxon>Chloroflexales</taxon>
        <taxon>Chloroflexineae</taxon>
        <taxon>Chloroflexaceae</taxon>
        <taxon>Chloroflexus</taxon>
    </lineage>
</organism>
<keyword id="KW-0227">DNA damage</keyword>
<keyword id="KW-0233">DNA recombination</keyword>
<keyword id="KW-0234">DNA repair</keyword>
<keyword id="KW-0479">Metal-binding</keyword>
<keyword id="KW-0862">Zinc</keyword>
<keyword id="KW-0863">Zinc-finger</keyword>
<gene>
    <name evidence="1" type="primary">recR</name>
    <name type="ordered locus">Chy400_0557</name>
</gene>
<proteinExistence type="inferred from homology"/>